<feature type="signal peptide" evidence="2">
    <location>
        <begin position="1"/>
        <end position="21"/>
    </location>
</feature>
<feature type="chain" id="PRO_0000022673" description="Protein virB9">
    <location>
        <begin position="22"/>
        <end position="293"/>
    </location>
</feature>
<feature type="disulfide bond" description="Interchain (with C-24 in virB7)" evidence="1">
    <location>
        <position position="262"/>
    </location>
</feature>
<proteinExistence type="inferred from homology"/>
<accession>P0A3W7</accession>
<accession>P05358</accession>
<accession>P09782</accession>
<comment type="function">
    <text evidence="1">Is essential for the biogenesis of the T-pilus, which is required for virulence and T-DNA transfer to plant cells. When is associated with virB7, might function as a nucleation center for recruitment of VirB proteins during assembly of the T-DNA transfer machine (By similarity).</text>
</comment>
<comment type="subunit">
    <text evidence="1">Heterodimer of virB7 and virB9; disulfide-linked.</text>
</comment>
<comment type="subcellular location">
    <subcellularLocation>
        <location evidence="1">Cell membrane</location>
        <topology evidence="1">Peripheral membrane protein</topology>
    </subcellularLocation>
</comment>
<comment type="similarity">
    <text evidence="3">Belongs to the TrbG/VirB9 family.</text>
</comment>
<organism>
    <name type="scientific">Agrobacterium tumefaciens (strain 15955)</name>
    <dbReference type="NCBI Taxonomy" id="190386"/>
    <lineage>
        <taxon>Bacteria</taxon>
        <taxon>Pseudomonadati</taxon>
        <taxon>Pseudomonadota</taxon>
        <taxon>Alphaproteobacteria</taxon>
        <taxon>Hyphomicrobiales</taxon>
        <taxon>Rhizobiaceae</taxon>
        <taxon>Rhizobium/Agrobacterium group</taxon>
        <taxon>Agrobacterium</taxon>
        <taxon>Agrobacterium tumefaciens complex</taxon>
    </lineage>
</organism>
<gene>
    <name type="primary">virB9</name>
</gene>
<protein>
    <recommendedName>
        <fullName>Protein virB9</fullName>
    </recommendedName>
</protein>
<name>VIRB9_AGRT9</name>
<reference key="1">
    <citation type="journal article" date="1988" name="Nucleic Acids Res.">
        <title>Analysis of the complete nucleotide sequence of the Agrobacterium tumefaciens virB operon.</title>
        <authorList>
            <person name="Thompson D.V."/>
            <person name="Melchers L.S."/>
            <person name="Idler K.B."/>
            <person name="Shilperoort R.A."/>
            <person name="Hooykaas P.J.J."/>
        </authorList>
    </citation>
    <scope>NUCLEOTIDE SEQUENCE [GENOMIC DNA]</scope>
</reference>
<reference key="2">
    <citation type="submission" date="2000-03" db="EMBL/GenBank/DDBJ databases">
        <title>Octopine-type Ti plasmid sequence.</title>
        <authorList>
            <person name="Winans S.C."/>
            <person name="Zhu J."/>
            <person name="Oger P.M."/>
            <person name="Schrammeijer B."/>
            <person name="Hooykaas P.J."/>
            <person name="Farrand S.K."/>
        </authorList>
    </citation>
    <scope>NUCLEOTIDE SEQUENCE [GENOMIC DNA]</scope>
</reference>
<geneLocation type="plasmid">
    <name>pTi15955</name>
</geneLocation>
<keyword id="KW-1003">Cell membrane</keyword>
<keyword id="KW-0192">Crown gall tumor</keyword>
<keyword id="KW-1015">Disulfide bond</keyword>
<keyword id="KW-0472">Membrane</keyword>
<keyword id="KW-0614">Plasmid</keyword>
<keyword id="KW-0732">Signal</keyword>
<keyword id="KW-0843">Virulence</keyword>
<evidence type="ECO:0000250" key="1"/>
<evidence type="ECO:0000255" key="2"/>
<evidence type="ECO:0000305" key="3"/>
<sequence>MTRKALFILACLFAAATGAEAEDTPMAGKLDPRMRYLAYNPDQVVRLSTAVGATLVVTFATNETVTSVAVSNSKDLAALPRGNYLFFKASQVLTPQPVIVLTASDSGMRRYVFSISSKTLSHLDKEQPDLYYSVQFAYPADDAAARRREAQQRAVVDRLHAEAQYQRKAEDLLDQPVTALGATDSNWHYVAQGDRSLLPLEVFDNGFTTVFHFPGNVRIPSIYTINPDGKEAVANYSVKGSDVEISSVSRGWRLRDGHTVLCIWNAAYDPVGQRPQTGTVRPDVKRVLKGAKG</sequence>
<dbReference type="EMBL" id="X06826">
    <property type="protein sequence ID" value="CAA29979.1"/>
    <property type="molecule type" value="Genomic_DNA"/>
</dbReference>
<dbReference type="PIR" id="S00785">
    <property type="entry name" value="B9AG55"/>
</dbReference>
<dbReference type="RefSeq" id="NP_059807.1">
    <property type="nucleotide sequence ID" value="NC_002377.1"/>
</dbReference>
<dbReference type="SMR" id="P0A3W7"/>
<dbReference type="GO" id="GO:0005886">
    <property type="term" value="C:plasma membrane"/>
    <property type="evidence" value="ECO:0007669"/>
    <property type="project" value="UniProtKB-SubCell"/>
</dbReference>
<dbReference type="CDD" id="cd06911">
    <property type="entry name" value="VirB9_CagX_TrbG"/>
    <property type="match status" value="1"/>
</dbReference>
<dbReference type="Gene3D" id="2.60.40.2500">
    <property type="match status" value="1"/>
</dbReference>
<dbReference type="InterPro" id="IPR010258">
    <property type="entry name" value="Conjugal_tfr_TrbG/VirB9/CagX"/>
</dbReference>
<dbReference type="InterPro" id="IPR014148">
    <property type="entry name" value="VirB9"/>
</dbReference>
<dbReference type="InterPro" id="IPR033645">
    <property type="entry name" value="VirB9/CagX/TrbG_C"/>
</dbReference>
<dbReference type="InterPro" id="IPR038161">
    <property type="entry name" value="VirB9/CagX/TrbG_C_sf"/>
</dbReference>
<dbReference type="NCBIfam" id="NF010435">
    <property type="entry name" value="PRK13861.1"/>
    <property type="match status" value="1"/>
</dbReference>
<dbReference type="NCBIfam" id="TIGR02781">
    <property type="entry name" value="VirB9"/>
    <property type="match status" value="1"/>
</dbReference>
<dbReference type="Pfam" id="PF03524">
    <property type="entry name" value="CagX"/>
    <property type="match status" value="1"/>
</dbReference>